<evidence type="ECO:0000255" key="1">
    <source>
        <dbReference type="PROSITE-ProRule" id="PRU00409"/>
    </source>
</evidence>
<evidence type="ECO:0000269" key="2">
    <source>
    </source>
</evidence>
<evidence type="ECO:0000305" key="3"/>
<evidence type="ECO:0007744" key="4">
    <source>
    </source>
</evidence>
<keyword id="KW-0067">ATP-binding</keyword>
<keyword id="KW-0210">Decarboxylase</keyword>
<keyword id="KW-0456">Lyase</keyword>
<keyword id="KW-0547">Nucleotide-binding</keyword>
<keyword id="KW-0597">Phosphoprotein</keyword>
<keyword id="KW-0658">Purine biosynthesis</keyword>
<keyword id="KW-1185">Reference proteome</keyword>
<accession>P21264</accession>
<accession>D6W2I6</accession>
<dbReference type="EC" id="4.1.1.21"/>
<dbReference type="EMBL" id="M59824">
    <property type="protein sequence ID" value="AAA34401.1"/>
    <property type="molecule type" value="Genomic_DNA"/>
</dbReference>
<dbReference type="EMBL" id="M58324">
    <property type="protein sequence ID" value="AAA34407.1"/>
    <property type="molecule type" value="Genomic_DNA"/>
</dbReference>
<dbReference type="EMBL" id="X90518">
    <property type="protein sequence ID" value="CAA62125.1"/>
    <property type="molecule type" value="Genomic_DNA"/>
</dbReference>
<dbReference type="EMBL" id="X94335">
    <property type="protein sequence ID" value="CAA64047.1"/>
    <property type="molecule type" value="Genomic_DNA"/>
</dbReference>
<dbReference type="EMBL" id="Z75036">
    <property type="protein sequence ID" value="CAA99327.1"/>
    <property type="molecule type" value="Genomic_DNA"/>
</dbReference>
<dbReference type="EMBL" id="BK006948">
    <property type="protein sequence ID" value="DAA10902.1"/>
    <property type="molecule type" value="Genomic_DNA"/>
</dbReference>
<dbReference type="PIR" id="JN0098">
    <property type="entry name" value="DEBYP"/>
</dbReference>
<dbReference type="RefSeq" id="NP_014771.3">
    <property type="nucleotide sequence ID" value="NM_001183547.3"/>
</dbReference>
<dbReference type="SMR" id="P21264"/>
<dbReference type="BioGRID" id="34523">
    <property type="interactions" value="107"/>
</dbReference>
<dbReference type="DIP" id="DIP-1171N"/>
<dbReference type="FunCoup" id="P21264">
    <property type="interactions" value="243"/>
</dbReference>
<dbReference type="IntAct" id="P21264">
    <property type="interactions" value="13"/>
</dbReference>
<dbReference type="MINT" id="P21264"/>
<dbReference type="STRING" id="4932.YOR128C"/>
<dbReference type="GlyGen" id="P21264">
    <property type="glycosylation" value="1 site"/>
</dbReference>
<dbReference type="iPTMnet" id="P21264"/>
<dbReference type="PaxDb" id="4932-YOR128C"/>
<dbReference type="PeptideAtlas" id="P21264"/>
<dbReference type="TopDownProteomics" id="P21264"/>
<dbReference type="EnsemblFungi" id="YOR128C_mRNA">
    <property type="protein sequence ID" value="YOR128C"/>
    <property type="gene ID" value="YOR128C"/>
</dbReference>
<dbReference type="GeneID" id="854295"/>
<dbReference type="KEGG" id="sce:YOR128C"/>
<dbReference type="AGR" id="SGD:S000005654"/>
<dbReference type="SGD" id="S000005654">
    <property type="gene designation" value="ADE2"/>
</dbReference>
<dbReference type="VEuPathDB" id="FungiDB:YOR128C"/>
<dbReference type="eggNOG" id="KOG2835">
    <property type="taxonomic scope" value="Eukaryota"/>
</dbReference>
<dbReference type="HOGENOM" id="CLU_011534_2_1_1"/>
<dbReference type="InParanoid" id="P21264"/>
<dbReference type="OMA" id="ITFDHEH"/>
<dbReference type="OrthoDB" id="15425at2759"/>
<dbReference type="BioCyc" id="MetaCyc:YOR128C-MONOMER"/>
<dbReference type="BioCyc" id="YEAST:YOR128C-MONOMER"/>
<dbReference type="BRENDA" id="4.1.1.21">
    <property type="organism ID" value="984"/>
</dbReference>
<dbReference type="UniPathway" id="UPA00074">
    <property type="reaction ID" value="UER00130"/>
</dbReference>
<dbReference type="BioGRID-ORCS" id="854295">
    <property type="hits" value="1 hit in 10 CRISPR screens"/>
</dbReference>
<dbReference type="PHI-base" id="PHI:501"/>
<dbReference type="PRO" id="PR:P21264"/>
<dbReference type="Proteomes" id="UP000002311">
    <property type="component" value="Chromosome XV"/>
</dbReference>
<dbReference type="RNAct" id="P21264">
    <property type="molecule type" value="protein"/>
</dbReference>
<dbReference type="GO" id="GO:0005737">
    <property type="term" value="C:cytoplasm"/>
    <property type="evidence" value="ECO:0007005"/>
    <property type="project" value="SGD"/>
</dbReference>
<dbReference type="GO" id="GO:0005524">
    <property type="term" value="F:ATP binding"/>
    <property type="evidence" value="ECO:0007669"/>
    <property type="project" value="UniProtKB-KW"/>
</dbReference>
<dbReference type="GO" id="GO:0046872">
    <property type="term" value="F:metal ion binding"/>
    <property type="evidence" value="ECO:0007669"/>
    <property type="project" value="InterPro"/>
</dbReference>
<dbReference type="GO" id="GO:0004638">
    <property type="term" value="F:phosphoribosylaminoimidazole carboxylase activity"/>
    <property type="evidence" value="ECO:0000315"/>
    <property type="project" value="SGD"/>
</dbReference>
<dbReference type="GO" id="GO:0006189">
    <property type="term" value="P:'de novo' IMP biosynthetic process"/>
    <property type="evidence" value="ECO:0007669"/>
    <property type="project" value="UniProtKB-UniPathway"/>
</dbReference>
<dbReference type="GO" id="GO:0006144">
    <property type="term" value="P:purine nucleobase metabolic process"/>
    <property type="evidence" value="ECO:0000315"/>
    <property type="project" value="SGD"/>
</dbReference>
<dbReference type="FunFam" id="3.40.50.1970:FF:000013">
    <property type="entry name" value="Phosphoribosylaminoimidazole carboxylase"/>
    <property type="match status" value="1"/>
</dbReference>
<dbReference type="FunFam" id="3.40.50.20:FF:000030">
    <property type="entry name" value="Phosphoribosylaminoimidazole carboxylase"/>
    <property type="match status" value="1"/>
</dbReference>
<dbReference type="FunFam" id="3.30.470.20:FF:000037">
    <property type="entry name" value="Phosphoribosylaminoimidazole carboxylase, chloroplastic"/>
    <property type="match status" value="1"/>
</dbReference>
<dbReference type="Gene3D" id="3.40.50.1970">
    <property type="match status" value="1"/>
</dbReference>
<dbReference type="Gene3D" id="3.40.50.20">
    <property type="match status" value="1"/>
</dbReference>
<dbReference type="Gene3D" id="3.30.1490.20">
    <property type="entry name" value="ATP-grasp fold, A domain"/>
    <property type="match status" value="1"/>
</dbReference>
<dbReference type="Gene3D" id="3.30.470.20">
    <property type="entry name" value="ATP-grasp fold, B domain"/>
    <property type="match status" value="1"/>
</dbReference>
<dbReference type="HAMAP" id="MF_01929">
    <property type="entry name" value="PurE_classI"/>
    <property type="match status" value="1"/>
</dbReference>
<dbReference type="HAMAP" id="MF_01928">
    <property type="entry name" value="PurK"/>
    <property type="match status" value="1"/>
</dbReference>
<dbReference type="InterPro" id="IPR016301">
    <property type="entry name" value="Ade2_fungi/plant"/>
</dbReference>
<dbReference type="InterPro" id="IPR011761">
    <property type="entry name" value="ATP-grasp"/>
</dbReference>
<dbReference type="InterPro" id="IPR003135">
    <property type="entry name" value="ATP-grasp_carboxylate-amine"/>
</dbReference>
<dbReference type="InterPro" id="IPR013815">
    <property type="entry name" value="ATP_grasp_subdomain_1"/>
</dbReference>
<dbReference type="InterPro" id="IPR016185">
    <property type="entry name" value="PreATP-grasp_dom_sf"/>
</dbReference>
<dbReference type="InterPro" id="IPR033747">
    <property type="entry name" value="PurE_ClassI"/>
</dbReference>
<dbReference type="InterPro" id="IPR000031">
    <property type="entry name" value="PurE_dom"/>
</dbReference>
<dbReference type="InterPro" id="IPR005875">
    <property type="entry name" value="PurK"/>
</dbReference>
<dbReference type="InterPro" id="IPR040686">
    <property type="entry name" value="PurK_C"/>
</dbReference>
<dbReference type="InterPro" id="IPR054350">
    <property type="entry name" value="PurT/PurK_preATP-grasp"/>
</dbReference>
<dbReference type="InterPro" id="IPR011054">
    <property type="entry name" value="Rudment_hybrid_motif"/>
</dbReference>
<dbReference type="NCBIfam" id="NF004679">
    <property type="entry name" value="PRK06019.1-5"/>
    <property type="match status" value="1"/>
</dbReference>
<dbReference type="NCBIfam" id="TIGR01162">
    <property type="entry name" value="purE"/>
    <property type="match status" value="1"/>
</dbReference>
<dbReference type="NCBIfam" id="TIGR01161">
    <property type="entry name" value="purK"/>
    <property type="match status" value="1"/>
</dbReference>
<dbReference type="PANTHER" id="PTHR11609:SF5">
    <property type="entry name" value="PHOSPHORIBOSYLAMINOIMIDAZOLE CARBOXYLASE"/>
    <property type="match status" value="1"/>
</dbReference>
<dbReference type="PANTHER" id="PTHR11609">
    <property type="entry name" value="PURINE BIOSYNTHESIS PROTEIN 6/7, PUR6/7"/>
    <property type="match status" value="1"/>
</dbReference>
<dbReference type="Pfam" id="PF00731">
    <property type="entry name" value="AIRC"/>
    <property type="match status" value="1"/>
</dbReference>
<dbReference type="Pfam" id="PF02222">
    <property type="entry name" value="ATP-grasp"/>
    <property type="match status" value="1"/>
</dbReference>
<dbReference type="Pfam" id="PF17769">
    <property type="entry name" value="PurK_C"/>
    <property type="match status" value="1"/>
</dbReference>
<dbReference type="Pfam" id="PF22660">
    <property type="entry name" value="RS_preATP-grasp-like"/>
    <property type="match status" value="1"/>
</dbReference>
<dbReference type="PIRSF" id="PIRSF001340">
    <property type="entry name" value="AIR_carboxylase"/>
    <property type="match status" value="1"/>
</dbReference>
<dbReference type="SMART" id="SM01001">
    <property type="entry name" value="AIRC"/>
    <property type="match status" value="1"/>
</dbReference>
<dbReference type="SUPFAM" id="SSF56059">
    <property type="entry name" value="Glutathione synthetase ATP-binding domain-like"/>
    <property type="match status" value="1"/>
</dbReference>
<dbReference type="SUPFAM" id="SSF52255">
    <property type="entry name" value="N5-CAIR mutase (phosphoribosylaminoimidazole carboxylase, PurE)"/>
    <property type="match status" value="1"/>
</dbReference>
<dbReference type="SUPFAM" id="SSF52440">
    <property type="entry name" value="PreATP-grasp domain"/>
    <property type="match status" value="1"/>
</dbReference>
<dbReference type="SUPFAM" id="SSF51246">
    <property type="entry name" value="Rudiment single hybrid motif"/>
    <property type="match status" value="1"/>
</dbReference>
<dbReference type="PROSITE" id="PS50975">
    <property type="entry name" value="ATP_GRASP"/>
    <property type="match status" value="1"/>
</dbReference>
<protein>
    <recommendedName>
        <fullName>Phosphoribosylaminoimidazole carboxylase</fullName>
        <ecNumber>4.1.1.21</ecNumber>
    </recommendedName>
    <alternativeName>
        <fullName>AIR carboxylase</fullName>
        <shortName>AIRC</shortName>
    </alternativeName>
</protein>
<sequence>MDSRTVGILGGGQLGRMIVEAANRLNIKTVILDAENSPAKQISNSNDHVNGSFSNPLDIEKLAEKCDVLTIEIEHVDVPTLKNLQVKHPKLKIYPSPETIRLIQDKYIQKEHLIKNGIAVTQSVPVEQASETSLLNVGRDLGFPFVLKSRTLAYDGRGNFVVKNKEMIPEALEVLKDRPLYAEKWAPFTKELAVMIVRSVNGLVFSYPIVETIHKDNICDLCYAPARVPDSVQLKAKLLAENAIKSFPGCGIFGVEMFYLETGELLINEIAPRPHNSGHYTIDACVTSQFEAHLRSILDLPMPKNFTSFSTITTNAIMLNVLGDKHTKDKELETCERALATPGSSVYLYGKESRPNRKVGHINIIASSMAECEQRLNYITGRTDIPIKISVAQKLDLEAMVKPLVGIIMGSDSDLPVMSAACAVLKDFGVPFEVTIVSAHRTPHRMSAYAISASKRGIKTIIAGAGGAAHLPGMVAAMTPLPVIGVPVKGSCLDGVDSLHSIVQMPRGVPVATVAINNSTNAALLAVRLLGAYDSSYTTKMEQFLLKQEEEVLVKAQKLETVGYEAYLENK</sequence>
<name>PUR6_YEAST</name>
<gene>
    <name type="primary">ADE2</name>
    <name type="ordered locus">YOR128C</name>
    <name type="ORF">O3293</name>
    <name type="ORF">YOR3293C</name>
</gene>
<proteinExistence type="evidence at protein level"/>
<feature type="chain" id="PRO_0000075028" description="Phosphoribosylaminoimidazole carboxylase">
    <location>
        <begin position="1"/>
        <end position="571"/>
    </location>
</feature>
<feature type="domain" description="ATP-grasp" evidence="1">
    <location>
        <begin position="110"/>
        <end position="298"/>
    </location>
</feature>
<feature type="binding site" evidence="1">
    <location>
        <begin position="138"/>
        <end position="193"/>
    </location>
    <ligand>
        <name>ATP</name>
        <dbReference type="ChEBI" id="CHEBI:30616"/>
    </ligand>
</feature>
<feature type="modified residue" description="Phosphoserine" evidence="4">
    <location>
        <position position="37"/>
    </location>
</feature>
<feature type="sequence conflict" description="In Ref. 2; AAA34407." evidence="3" ref="2">
    <original>R</original>
    <variation>G</variation>
    <location>
        <position position="101"/>
    </location>
</feature>
<feature type="sequence conflict" description="In Ref. 2; AAA34407." evidence="3" ref="2">
    <original>A</original>
    <variation>G</variation>
    <location>
        <position position="186"/>
    </location>
</feature>
<feature type="sequence conflict" description="In Ref. 2; AAA34407." evidence="3" ref="2">
    <original>S</original>
    <variation>F</variation>
    <location>
        <position position="206"/>
    </location>
</feature>
<feature type="sequence conflict" description="In Ref. 2." evidence="3" ref="2">
    <original>ENAIKSFPGCGIF</original>
    <variation>KMQSNFSRLWYI</variation>
    <location>
        <begin position="241"/>
        <end position="253"/>
    </location>
</feature>
<feature type="sequence conflict" description="In Ref. 2; AAA34407." evidence="3" ref="2">
    <original>I</original>
    <variation>L</variation>
    <location>
        <position position="387"/>
    </location>
</feature>
<feature type="sequence conflict" description="In Ref. 2; AAA34407." evidence="3" ref="2">
    <original>I</original>
    <variation>V</variation>
    <location>
        <position position="407"/>
    </location>
</feature>
<feature type="sequence conflict" description="In Ref. 2; AAA34407." evidence="3" ref="2">
    <original>P</original>
    <variation>T</variation>
    <location>
        <position position="431"/>
    </location>
</feature>
<feature type="sequence conflict" description="In Ref. 2; AAA34407." evidence="3" ref="2">
    <original>V</original>
    <variation>L</variation>
    <location>
        <position position="434"/>
    </location>
</feature>
<feature type="sequence conflict" description="In Ref. 2; AAA34407." evidence="3" ref="2">
    <original>I</original>
    <variation>T</variation>
    <location>
        <position position="502"/>
    </location>
</feature>
<organism>
    <name type="scientific">Saccharomyces cerevisiae (strain ATCC 204508 / S288c)</name>
    <name type="common">Baker's yeast</name>
    <dbReference type="NCBI Taxonomy" id="559292"/>
    <lineage>
        <taxon>Eukaryota</taxon>
        <taxon>Fungi</taxon>
        <taxon>Dikarya</taxon>
        <taxon>Ascomycota</taxon>
        <taxon>Saccharomycotina</taxon>
        <taxon>Saccharomycetes</taxon>
        <taxon>Saccharomycetales</taxon>
        <taxon>Saccharomycetaceae</taxon>
        <taxon>Saccharomyces</taxon>
    </lineage>
</organism>
<comment type="catalytic activity">
    <reaction>
        <text>5-amino-1-(5-phospho-D-ribosyl)imidazole-4-carboxylate + H(+) = 5-amino-1-(5-phospho-beta-D-ribosyl)imidazole + CO2</text>
        <dbReference type="Rhea" id="RHEA:10792"/>
        <dbReference type="ChEBI" id="CHEBI:15378"/>
        <dbReference type="ChEBI" id="CHEBI:16526"/>
        <dbReference type="ChEBI" id="CHEBI:77657"/>
        <dbReference type="ChEBI" id="CHEBI:137981"/>
        <dbReference type="EC" id="4.1.1.21"/>
    </reaction>
</comment>
<comment type="pathway">
    <text>Purine metabolism; IMP biosynthesis via de novo pathway; 5-amino-1-(5-phospho-D-ribosyl)imidazole-4-carboxylate from 5-amino-1-(5-phospho-D-ribosyl)imidazole (carboxylase route): step 1/1.</text>
</comment>
<comment type="miscellaneous">
    <text evidence="2">Present with 5410 molecules/cell in log phase SD medium.</text>
</comment>
<comment type="similarity">
    <text evidence="3">In the C-terminal section; belongs to the AIR carboxylase family. Class I subfamily.</text>
</comment>
<reference key="1">
    <citation type="journal article" date="1990" name="Gene">
        <title>The ADE2 gene from Saccharomyces cerevisiae: sequence and new vectors.</title>
        <authorList>
            <person name="Stotz A."/>
            <person name="Linder P."/>
        </authorList>
    </citation>
    <scope>NUCLEOTIDE SEQUENCE [GENOMIC DNA]</scope>
</reference>
<reference key="2">
    <citation type="journal article" date="1992" name="Yeast">
        <title>Molecular cloning and analysis of autonomous replicating sequence of Candida maltosa.</title>
        <authorList>
            <person name="Sasnauskas K."/>
            <person name="Jomantiene R."/>
            <person name="Lebediene E."/>
            <person name="Lebedys J."/>
            <person name="Januska A."/>
            <person name="Janulaitis A."/>
        </authorList>
    </citation>
    <scope>NUCLEOTIDE SEQUENCE [GENOMIC DNA]</scope>
</reference>
<reference key="3">
    <citation type="journal article" date="1996" name="Yeast">
        <title>Sequencing and analysis of 51 kb on the right arm of chromosome XV from Saccharomyces cerevisiae reveals 30 open reading frames.</title>
        <authorList>
            <person name="Wiemann S."/>
            <person name="Rechmann S."/>
            <person name="Benes V."/>
            <person name="Voss H."/>
            <person name="Schwager C."/>
            <person name="Vlcek C."/>
            <person name="Stegemann J."/>
            <person name="Zimmermann J."/>
            <person name="Erfle H."/>
            <person name="Paces V."/>
            <person name="Ansorge W."/>
        </authorList>
    </citation>
    <scope>NUCLEOTIDE SEQUENCE [GENOMIC DNA]</scope>
    <source>
        <strain>ATCC 96604 / S288c / FY1679</strain>
    </source>
</reference>
<reference key="4">
    <citation type="journal article" date="1997" name="Yeast">
        <title>DNA sequencing and analysis of 130 kb from yeast chromosome XV.</title>
        <authorList>
            <person name="Voss H."/>
            <person name="Benes V."/>
            <person name="Andrade M.A."/>
            <person name="Valencia A."/>
            <person name="Rechmann S."/>
            <person name="Teodoru C."/>
            <person name="Schwager C."/>
            <person name="Paces V."/>
            <person name="Sander C."/>
            <person name="Ansorge W."/>
        </authorList>
    </citation>
    <scope>NUCLEOTIDE SEQUENCE [GENOMIC DNA]</scope>
</reference>
<reference key="5">
    <citation type="journal article" date="1997" name="Nature">
        <title>The nucleotide sequence of Saccharomyces cerevisiae chromosome XV.</title>
        <authorList>
            <person name="Dujon B."/>
            <person name="Albermann K."/>
            <person name="Aldea M."/>
            <person name="Alexandraki D."/>
            <person name="Ansorge W."/>
            <person name="Arino J."/>
            <person name="Benes V."/>
            <person name="Bohn C."/>
            <person name="Bolotin-Fukuhara M."/>
            <person name="Bordonne R."/>
            <person name="Boyer J."/>
            <person name="Camasses A."/>
            <person name="Casamayor A."/>
            <person name="Casas C."/>
            <person name="Cheret G."/>
            <person name="Cziepluch C."/>
            <person name="Daignan-Fornier B."/>
            <person name="Dang V.-D."/>
            <person name="de Haan M."/>
            <person name="Delius H."/>
            <person name="Durand P."/>
            <person name="Fairhead C."/>
            <person name="Feldmann H."/>
            <person name="Gaillon L."/>
            <person name="Galisson F."/>
            <person name="Gamo F.-J."/>
            <person name="Gancedo C."/>
            <person name="Goffeau A."/>
            <person name="Goulding S.E."/>
            <person name="Grivell L.A."/>
            <person name="Habbig B."/>
            <person name="Hand N.J."/>
            <person name="Hani J."/>
            <person name="Hattenhorst U."/>
            <person name="Hebling U."/>
            <person name="Hernando Y."/>
            <person name="Herrero E."/>
            <person name="Heumann K."/>
            <person name="Hiesel R."/>
            <person name="Hilger F."/>
            <person name="Hofmann B."/>
            <person name="Hollenberg C.P."/>
            <person name="Hughes B."/>
            <person name="Jauniaux J.-C."/>
            <person name="Kalogeropoulos A."/>
            <person name="Katsoulou C."/>
            <person name="Kordes E."/>
            <person name="Lafuente M.J."/>
            <person name="Landt O."/>
            <person name="Louis E.J."/>
            <person name="Maarse A.C."/>
            <person name="Madania A."/>
            <person name="Mannhaupt G."/>
            <person name="Marck C."/>
            <person name="Martin R.P."/>
            <person name="Mewes H.-W."/>
            <person name="Michaux G."/>
            <person name="Paces V."/>
            <person name="Parle-McDermott A.G."/>
            <person name="Pearson B.M."/>
            <person name="Perrin A."/>
            <person name="Pettersson B."/>
            <person name="Poch O."/>
            <person name="Pohl T.M."/>
            <person name="Poirey R."/>
            <person name="Portetelle D."/>
            <person name="Pujol A."/>
            <person name="Purnelle B."/>
            <person name="Ramezani Rad M."/>
            <person name="Rechmann S."/>
            <person name="Schwager C."/>
            <person name="Schweizer M."/>
            <person name="Sor F."/>
            <person name="Sterky F."/>
            <person name="Tarassov I.A."/>
            <person name="Teodoru C."/>
            <person name="Tettelin H."/>
            <person name="Thierry A."/>
            <person name="Tobiasch E."/>
            <person name="Tzermia M."/>
            <person name="Uhlen M."/>
            <person name="Unseld M."/>
            <person name="Valens M."/>
            <person name="Vandenbol M."/>
            <person name="Vetter I."/>
            <person name="Vlcek C."/>
            <person name="Voet M."/>
            <person name="Volckaert G."/>
            <person name="Voss H."/>
            <person name="Wambutt R."/>
            <person name="Wedler H."/>
            <person name="Wiemann S."/>
            <person name="Winsor B."/>
            <person name="Wolfe K.H."/>
            <person name="Zollner A."/>
            <person name="Zumstein E."/>
            <person name="Kleine K."/>
        </authorList>
    </citation>
    <scope>NUCLEOTIDE SEQUENCE [LARGE SCALE GENOMIC DNA]</scope>
    <source>
        <strain>ATCC 204508 / S288c</strain>
    </source>
</reference>
<reference key="6">
    <citation type="journal article" date="2014" name="G3 (Bethesda)">
        <title>The reference genome sequence of Saccharomyces cerevisiae: Then and now.</title>
        <authorList>
            <person name="Engel S.R."/>
            <person name="Dietrich F.S."/>
            <person name="Fisk D.G."/>
            <person name="Binkley G."/>
            <person name="Balakrishnan R."/>
            <person name="Costanzo M.C."/>
            <person name="Dwight S.S."/>
            <person name="Hitz B.C."/>
            <person name="Karra K."/>
            <person name="Nash R.S."/>
            <person name="Weng S."/>
            <person name="Wong E.D."/>
            <person name="Lloyd P."/>
            <person name="Skrzypek M.S."/>
            <person name="Miyasato S.R."/>
            <person name="Simison M."/>
            <person name="Cherry J.M."/>
        </authorList>
    </citation>
    <scope>GENOME REANNOTATION</scope>
    <source>
        <strain>ATCC 204508 / S288c</strain>
    </source>
</reference>
<reference key="7">
    <citation type="journal article" date="2003" name="Nature">
        <title>Global analysis of protein expression in yeast.</title>
        <authorList>
            <person name="Ghaemmaghami S."/>
            <person name="Huh W.-K."/>
            <person name="Bower K."/>
            <person name="Howson R.W."/>
            <person name="Belle A."/>
            <person name="Dephoure N."/>
            <person name="O'Shea E.K."/>
            <person name="Weissman J.S."/>
        </authorList>
    </citation>
    <scope>LEVEL OF PROTEIN EXPRESSION [LARGE SCALE ANALYSIS]</scope>
</reference>
<reference key="8">
    <citation type="journal article" date="2009" name="Science">
        <title>Global analysis of Cdk1 substrate phosphorylation sites provides insights into evolution.</title>
        <authorList>
            <person name="Holt L.J."/>
            <person name="Tuch B.B."/>
            <person name="Villen J."/>
            <person name="Johnson A.D."/>
            <person name="Gygi S.P."/>
            <person name="Morgan D.O."/>
        </authorList>
    </citation>
    <scope>PHOSPHORYLATION [LARGE SCALE ANALYSIS] AT SER-37</scope>
    <scope>IDENTIFICATION BY MASS SPECTROMETRY [LARGE SCALE ANALYSIS]</scope>
</reference>